<comment type="function">
    <text evidence="1">Metallothiol transferase which confers resistance to fosfomycin by catalyzing the addition of a thiol cofactor to fosfomycin. L-cysteine is probably the physiological thiol donor.</text>
</comment>
<comment type="cofactor">
    <cofactor evidence="1">
        <name>Mg(2+)</name>
        <dbReference type="ChEBI" id="CHEBI:18420"/>
    </cofactor>
</comment>
<comment type="subunit">
    <text evidence="1">Homodimer.</text>
</comment>
<comment type="subcellular location">
    <subcellularLocation>
        <location evidence="1">Cytoplasm</location>
    </subcellularLocation>
</comment>
<comment type="similarity">
    <text evidence="1">Belongs to the fosfomycin resistance protein family. FosB subfamily.</text>
</comment>
<name>FOSB_GEOTN</name>
<proteinExistence type="inferred from homology"/>
<dbReference type="EC" id="2.5.1.-" evidence="1"/>
<dbReference type="EMBL" id="CP000557">
    <property type="protein sequence ID" value="ABO68144.1"/>
    <property type="molecule type" value="Genomic_DNA"/>
</dbReference>
<dbReference type="RefSeq" id="WP_008881005.1">
    <property type="nucleotide sequence ID" value="NC_009328.1"/>
</dbReference>
<dbReference type="SMR" id="A4IS40"/>
<dbReference type="GeneID" id="87623058"/>
<dbReference type="KEGG" id="gtn:GTNG_2799"/>
<dbReference type="eggNOG" id="COG0346">
    <property type="taxonomic scope" value="Bacteria"/>
</dbReference>
<dbReference type="HOGENOM" id="CLU_121356_0_0_9"/>
<dbReference type="Proteomes" id="UP000001578">
    <property type="component" value="Chromosome"/>
</dbReference>
<dbReference type="GO" id="GO:0005737">
    <property type="term" value="C:cytoplasm"/>
    <property type="evidence" value="ECO:0007669"/>
    <property type="project" value="UniProtKB-SubCell"/>
</dbReference>
<dbReference type="GO" id="GO:0000287">
    <property type="term" value="F:magnesium ion binding"/>
    <property type="evidence" value="ECO:0007669"/>
    <property type="project" value="UniProtKB-UniRule"/>
</dbReference>
<dbReference type="GO" id="GO:0016765">
    <property type="term" value="F:transferase activity, transferring alkyl or aryl (other than methyl) groups"/>
    <property type="evidence" value="ECO:0007669"/>
    <property type="project" value="UniProtKB-UniRule"/>
</dbReference>
<dbReference type="GO" id="GO:0046677">
    <property type="term" value="P:response to antibiotic"/>
    <property type="evidence" value="ECO:0007669"/>
    <property type="project" value="UniProtKB-UniRule"/>
</dbReference>
<dbReference type="CDD" id="cd08363">
    <property type="entry name" value="FosB"/>
    <property type="match status" value="1"/>
</dbReference>
<dbReference type="Gene3D" id="3.10.180.10">
    <property type="entry name" value="2,3-Dihydroxybiphenyl 1,2-Dioxygenase, domain 1"/>
    <property type="match status" value="1"/>
</dbReference>
<dbReference type="HAMAP" id="MF_01512">
    <property type="entry name" value="FosB"/>
    <property type="match status" value="1"/>
</dbReference>
<dbReference type="InterPro" id="IPR051332">
    <property type="entry name" value="Fosfomycin_Res_Enzymes"/>
</dbReference>
<dbReference type="InterPro" id="IPR029068">
    <property type="entry name" value="Glyas_Bleomycin-R_OHBP_Dase"/>
</dbReference>
<dbReference type="InterPro" id="IPR004360">
    <property type="entry name" value="Glyas_Fos-R_dOase_dom"/>
</dbReference>
<dbReference type="InterPro" id="IPR022858">
    <property type="entry name" value="Metallothiol_Trafse_FosB"/>
</dbReference>
<dbReference type="InterPro" id="IPR037523">
    <property type="entry name" value="VOC"/>
</dbReference>
<dbReference type="NCBIfam" id="NF003152">
    <property type="entry name" value="PRK04101.1"/>
    <property type="match status" value="1"/>
</dbReference>
<dbReference type="PANTHER" id="PTHR36113:SF6">
    <property type="entry name" value="FOSFOMYCIN RESISTANCE PROTEIN FOSX"/>
    <property type="match status" value="1"/>
</dbReference>
<dbReference type="PANTHER" id="PTHR36113">
    <property type="entry name" value="LYASE, PUTATIVE-RELATED-RELATED"/>
    <property type="match status" value="1"/>
</dbReference>
<dbReference type="Pfam" id="PF00903">
    <property type="entry name" value="Glyoxalase"/>
    <property type="match status" value="1"/>
</dbReference>
<dbReference type="SUPFAM" id="SSF54593">
    <property type="entry name" value="Glyoxalase/Bleomycin resistance protein/Dihydroxybiphenyl dioxygenase"/>
    <property type="match status" value="1"/>
</dbReference>
<dbReference type="PROSITE" id="PS51819">
    <property type="entry name" value="VOC"/>
    <property type="match status" value="1"/>
</dbReference>
<evidence type="ECO:0000255" key="1">
    <source>
        <dbReference type="HAMAP-Rule" id="MF_01512"/>
    </source>
</evidence>
<evidence type="ECO:0000255" key="2">
    <source>
        <dbReference type="PROSITE-ProRule" id="PRU01163"/>
    </source>
</evidence>
<feature type="chain" id="PRO_0000296658" description="Metallothiol transferase FosB">
    <location>
        <begin position="1"/>
        <end position="140"/>
    </location>
</feature>
<feature type="domain" description="VOC" evidence="2">
    <location>
        <begin position="5"/>
        <end position="120"/>
    </location>
</feature>
<feature type="active site" description="Proton donor/acceptor" evidence="2">
    <location>
        <position position="116"/>
    </location>
</feature>
<feature type="binding site" evidence="1">
    <location>
        <position position="8"/>
    </location>
    <ligand>
        <name>Mg(2+)</name>
        <dbReference type="ChEBI" id="CHEBI:18420"/>
    </ligand>
</feature>
<feature type="binding site" evidence="1">
    <location>
        <position position="67"/>
    </location>
    <ligand>
        <name>Mg(2+)</name>
        <dbReference type="ChEBI" id="CHEBI:18420"/>
    </ligand>
</feature>
<feature type="binding site" evidence="1">
    <location>
        <position position="116"/>
    </location>
    <ligand>
        <name>Mg(2+)</name>
        <dbReference type="ChEBI" id="CHEBI:18420"/>
    </ligand>
</feature>
<accession>A4IS40</accession>
<protein>
    <recommendedName>
        <fullName evidence="1">Metallothiol transferase FosB</fullName>
        <ecNumber evidence="1">2.5.1.-</ecNumber>
    </recommendedName>
    <alternativeName>
        <fullName evidence="1">Fosfomycin resistance protein</fullName>
    </alternativeName>
</protein>
<organism>
    <name type="scientific">Geobacillus thermodenitrificans (strain NG80-2)</name>
    <dbReference type="NCBI Taxonomy" id="420246"/>
    <lineage>
        <taxon>Bacteria</taxon>
        <taxon>Bacillati</taxon>
        <taxon>Bacillota</taxon>
        <taxon>Bacilli</taxon>
        <taxon>Bacillales</taxon>
        <taxon>Anoxybacillaceae</taxon>
        <taxon>Geobacillus</taxon>
    </lineage>
</organism>
<keyword id="KW-0046">Antibiotic resistance</keyword>
<keyword id="KW-0963">Cytoplasm</keyword>
<keyword id="KW-0460">Magnesium</keyword>
<keyword id="KW-0479">Metal-binding</keyword>
<keyword id="KW-0808">Transferase</keyword>
<sequence>MRIGGINHLTFSVSDLEKSIHFYQNVFGAKLLVKGRNLAYFDLNGIWLALNVQQDIPRNDIQHSYTHIAFSVKEEDFDHVVEKLKELGVNILPGRERDERDKRSVYFTDPDGHKFEFHTGTLNDRLSYYKSEMHHMQFFD</sequence>
<gene>
    <name evidence="1" type="primary">fosB</name>
    <name type="ordered locus">GTNG_2799</name>
</gene>
<reference key="1">
    <citation type="journal article" date="2007" name="Proc. Natl. Acad. Sci. U.S.A.">
        <title>Genome and proteome of long-chain alkane degrading Geobacillus thermodenitrificans NG80-2 isolated from a deep-subsurface oil reservoir.</title>
        <authorList>
            <person name="Feng L."/>
            <person name="Wang W."/>
            <person name="Cheng J."/>
            <person name="Ren Y."/>
            <person name="Zhao G."/>
            <person name="Gao C."/>
            <person name="Tang Y."/>
            <person name="Liu X."/>
            <person name="Han W."/>
            <person name="Peng X."/>
            <person name="Liu R."/>
            <person name="Wang L."/>
        </authorList>
    </citation>
    <scope>NUCLEOTIDE SEQUENCE [LARGE SCALE GENOMIC DNA]</scope>
    <source>
        <strain>NG80-2</strain>
    </source>
</reference>